<evidence type="ECO:0000255" key="1">
    <source>
        <dbReference type="HAMAP-Rule" id="MF_01456"/>
    </source>
</evidence>
<organism>
    <name type="scientific">Solanum lycopersicum</name>
    <name type="common">Tomato</name>
    <name type="synonym">Lycopersicon esculentum</name>
    <dbReference type="NCBI Taxonomy" id="4081"/>
    <lineage>
        <taxon>Eukaryota</taxon>
        <taxon>Viridiplantae</taxon>
        <taxon>Streptophyta</taxon>
        <taxon>Embryophyta</taxon>
        <taxon>Tracheophyta</taxon>
        <taxon>Spermatophyta</taxon>
        <taxon>Magnoliopsida</taxon>
        <taxon>eudicotyledons</taxon>
        <taxon>Gunneridae</taxon>
        <taxon>Pentapetalae</taxon>
        <taxon>asterids</taxon>
        <taxon>lamiids</taxon>
        <taxon>Solanales</taxon>
        <taxon>Solanaceae</taxon>
        <taxon>Solanoideae</taxon>
        <taxon>Solaneae</taxon>
        <taxon>Solanum</taxon>
        <taxon>Solanum subgen. Lycopersicon</taxon>
    </lineage>
</organism>
<name>NU4LC_SOLLC</name>
<reference key="1">
    <citation type="journal article" date="2006" name="Theor. Appl. Genet.">
        <title>Complete chloroplast genome sequences of Solanum bulbocastanum, Solanum lycopersicum and comparative analyses with other Solanaceae genomes.</title>
        <authorList>
            <person name="Daniell H."/>
            <person name="Lee S.-B."/>
            <person name="Grevich J."/>
            <person name="Saski C."/>
            <person name="Quesada-Vargas T."/>
            <person name="Guda C."/>
            <person name="Tomkins J."/>
            <person name="Jansen R.K."/>
        </authorList>
    </citation>
    <scope>NUCLEOTIDE SEQUENCE [LARGE SCALE GENOMIC DNA]</scope>
    <source>
        <strain>cv. LA3023</strain>
    </source>
</reference>
<reference key="2">
    <citation type="journal article" date="2006" name="J. Mol. Evol.">
        <title>Sequence of the tomato chloroplast DNA and evolutionary comparison of solanaceous plastid genomes.</title>
        <authorList>
            <person name="Kahlau S."/>
            <person name="Aspinall S."/>
            <person name="Gray J.C."/>
            <person name="Bock R."/>
        </authorList>
    </citation>
    <scope>NUCLEOTIDE SEQUENCE [LARGE SCALE GENOMIC DNA]</scope>
    <source>
        <strain>cv. IPA-6</strain>
    </source>
</reference>
<feature type="chain" id="PRO_0000277415" description="NAD(P)H-quinone oxidoreductase subunit 4L, chloroplastic">
    <location>
        <begin position="1"/>
        <end position="101"/>
    </location>
</feature>
<feature type="transmembrane region" description="Helical" evidence="1">
    <location>
        <begin position="2"/>
        <end position="22"/>
    </location>
</feature>
<feature type="transmembrane region" description="Helical" evidence="1">
    <location>
        <begin position="32"/>
        <end position="52"/>
    </location>
</feature>
<feature type="transmembrane region" description="Helical" evidence="1">
    <location>
        <begin position="61"/>
        <end position="81"/>
    </location>
</feature>
<comment type="function">
    <text evidence="1">NDH shuttles electrons from NAD(P)H:plastoquinone, via FMN and iron-sulfur (Fe-S) centers, to quinones in the photosynthetic chain and possibly in a chloroplast respiratory chain. The immediate electron acceptor for the enzyme in this species is believed to be plastoquinone. Couples the redox reaction to proton translocation, and thus conserves the redox energy in a proton gradient.</text>
</comment>
<comment type="catalytic activity">
    <reaction evidence="1">
        <text>a plastoquinone + NADH + (n+1) H(+)(in) = a plastoquinol + NAD(+) + n H(+)(out)</text>
        <dbReference type="Rhea" id="RHEA:42608"/>
        <dbReference type="Rhea" id="RHEA-COMP:9561"/>
        <dbReference type="Rhea" id="RHEA-COMP:9562"/>
        <dbReference type="ChEBI" id="CHEBI:15378"/>
        <dbReference type="ChEBI" id="CHEBI:17757"/>
        <dbReference type="ChEBI" id="CHEBI:57540"/>
        <dbReference type="ChEBI" id="CHEBI:57945"/>
        <dbReference type="ChEBI" id="CHEBI:62192"/>
    </reaction>
</comment>
<comment type="catalytic activity">
    <reaction evidence="1">
        <text>a plastoquinone + NADPH + (n+1) H(+)(in) = a plastoquinol + NADP(+) + n H(+)(out)</text>
        <dbReference type="Rhea" id="RHEA:42612"/>
        <dbReference type="Rhea" id="RHEA-COMP:9561"/>
        <dbReference type="Rhea" id="RHEA-COMP:9562"/>
        <dbReference type="ChEBI" id="CHEBI:15378"/>
        <dbReference type="ChEBI" id="CHEBI:17757"/>
        <dbReference type="ChEBI" id="CHEBI:57783"/>
        <dbReference type="ChEBI" id="CHEBI:58349"/>
        <dbReference type="ChEBI" id="CHEBI:62192"/>
    </reaction>
</comment>
<comment type="subunit">
    <text evidence="1">NDH is composed of at least 16 different subunits, 5 of which are encoded in the nucleus.</text>
</comment>
<comment type="subcellular location">
    <subcellularLocation>
        <location evidence="1">Plastid</location>
        <location evidence="1">Chloroplast thylakoid membrane</location>
        <topology evidence="1">Multi-pass membrane protein</topology>
    </subcellularLocation>
</comment>
<comment type="similarity">
    <text evidence="1">Belongs to the complex I subunit 4L family.</text>
</comment>
<protein>
    <recommendedName>
        <fullName evidence="1">NAD(P)H-quinone oxidoreductase subunit 4L, chloroplastic</fullName>
        <ecNumber evidence="1">7.1.1.-</ecNumber>
    </recommendedName>
    <alternativeName>
        <fullName evidence="1">NAD(P)H dehydrogenase subunit 4L</fullName>
    </alternativeName>
    <alternativeName>
        <fullName evidence="1">NADH-plastoquinone oxidoreductase subunit 4L</fullName>
    </alternativeName>
</protein>
<keyword id="KW-0150">Chloroplast</keyword>
<keyword id="KW-0472">Membrane</keyword>
<keyword id="KW-0520">NAD</keyword>
<keyword id="KW-0521">NADP</keyword>
<keyword id="KW-0934">Plastid</keyword>
<keyword id="KW-0618">Plastoquinone</keyword>
<keyword id="KW-0874">Quinone</keyword>
<keyword id="KW-1185">Reference proteome</keyword>
<keyword id="KW-0793">Thylakoid</keyword>
<keyword id="KW-1278">Translocase</keyword>
<keyword id="KW-0812">Transmembrane</keyword>
<keyword id="KW-1133">Transmembrane helix</keyword>
<keyword id="KW-0813">Transport</keyword>
<dbReference type="EC" id="7.1.1.-" evidence="1"/>
<dbReference type="EMBL" id="DQ347959">
    <property type="protein sequence ID" value="ABC56353.1"/>
    <property type="molecule type" value="Genomic_DNA"/>
</dbReference>
<dbReference type="EMBL" id="AM087200">
    <property type="protein sequence ID" value="CAJ32447.1"/>
    <property type="molecule type" value="Genomic_DNA"/>
</dbReference>
<dbReference type="RefSeq" id="AP_004981.1">
    <property type="nucleotide sequence ID" value="AC_000188.1"/>
</dbReference>
<dbReference type="RefSeq" id="YP_008563141.1">
    <property type="nucleotide sequence ID" value="NC_007898.3"/>
</dbReference>
<dbReference type="SMR" id="Q2MI48"/>
<dbReference type="FunCoup" id="Q2MI48">
    <property type="interactions" value="63"/>
</dbReference>
<dbReference type="STRING" id="4081.Q2MI48"/>
<dbReference type="GeneID" id="3950380"/>
<dbReference type="KEGG" id="sly:3950380"/>
<dbReference type="InParanoid" id="Q2MI48"/>
<dbReference type="OrthoDB" id="1925110at2759"/>
<dbReference type="Proteomes" id="UP000004994">
    <property type="component" value="Chloroplast"/>
</dbReference>
<dbReference type="GO" id="GO:0009535">
    <property type="term" value="C:chloroplast thylakoid membrane"/>
    <property type="evidence" value="ECO:0007669"/>
    <property type="project" value="UniProtKB-SubCell"/>
</dbReference>
<dbReference type="GO" id="GO:0030964">
    <property type="term" value="C:NADH dehydrogenase complex"/>
    <property type="evidence" value="ECO:0000318"/>
    <property type="project" value="GO_Central"/>
</dbReference>
<dbReference type="GO" id="GO:0016655">
    <property type="term" value="F:oxidoreductase activity, acting on NAD(P)H, quinone or similar compound as acceptor"/>
    <property type="evidence" value="ECO:0007669"/>
    <property type="project" value="UniProtKB-UniRule"/>
</dbReference>
<dbReference type="GO" id="GO:0048038">
    <property type="term" value="F:quinone binding"/>
    <property type="evidence" value="ECO:0007669"/>
    <property type="project" value="UniProtKB-KW"/>
</dbReference>
<dbReference type="GO" id="GO:0042773">
    <property type="term" value="P:ATP synthesis coupled electron transport"/>
    <property type="evidence" value="ECO:0007669"/>
    <property type="project" value="InterPro"/>
</dbReference>
<dbReference type="GO" id="GO:0019684">
    <property type="term" value="P:photosynthesis, light reaction"/>
    <property type="evidence" value="ECO:0007669"/>
    <property type="project" value="UniProtKB-UniRule"/>
</dbReference>
<dbReference type="FunFam" id="1.10.287.3510:FF:000001">
    <property type="entry name" value="NADH-quinone oxidoreductase subunit K"/>
    <property type="match status" value="1"/>
</dbReference>
<dbReference type="Gene3D" id="1.10.287.3510">
    <property type="match status" value="1"/>
</dbReference>
<dbReference type="HAMAP" id="MF_01456">
    <property type="entry name" value="NDH1_NuoK"/>
    <property type="match status" value="1"/>
</dbReference>
<dbReference type="InterPro" id="IPR001133">
    <property type="entry name" value="NADH_UbQ_OxRdtase_chain4L/K"/>
</dbReference>
<dbReference type="InterPro" id="IPR039428">
    <property type="entry name" value="NUOK/Mnh_C1-like"/>
</dbReference>
<dbReference type="NCBIfam" id="NF004320">
    <property type="entry name" value="PRK05715.1-2"/>
    <property type="match status" value="1"/>
</dbReference>
<dbReference type="NCBIfam" id="NF004322">
    <property type="entry name" value="PRK05715.1-4"/>
    <property type="match status" value="1"/>
</dbReference>
<dbReference type="NCBIfam" id="NF004323">
    <property type="entry name" value="PRK05715.1-5"/>
    <property type="match status" value="1"/>
</dbReference>
<dbReference type="PANTHER" id="PTHR11434:SF16">
    <property type="entry name" value="NADH-UBIQUINONE OXIDOREDUCTASE CHAIN 4L"/>
    <property type="match status" value="1"/>
</dbReference>
<dbReference type="PANTHER" id="PTHR11434">
    <property type="entry name" value="NADH-UBIQUINONE OXIDOREDUCTASE SUBUNIT ND4L"/>
    <property type="match status" value="1"/>
</dbReference>
<dbReference type="Pfam" id="PF00420">
    <property type="entry name" value="Oxidored_q2"/>
    <property type="match status" value="1"/>
</dbReference>
<gene>
    <name evidence="1" type="primary">ndhE</name>
</gene>
<proteinExistence type="inferred from homology"/>
<geneLocation type="chloroplast"/>
<accession>Q2MI48</accession>
<sequence>MILEHVLVLSAYLFSIGIYGLITSRNMVRALMCLELILNAVNINFVTFSDFFDNRQLKGDIFSIFVIAIAAAEAAIGLAIVSSIYRNRKSTRINQSNLLNN</sequence>